<protein>
    <recommendedName>
        <fullName evidence="1">Multifunctional CCA protein</fullName>
    </recommendedName>
    <domain>
        <recommendedName>
            <fullName evidence="1">CCA-adding enzyme</fullName>
            <ecNumber evidence="1">2.7.7.72</ecNumber>
        </recommendedName>
        <alternativeName>
            <fullName evidence="1">CCA tRNA nucleotidyltransferase</fullName>
        </alternativeName>
        <alternativeName>
            <fullName evidence="1">tRNA CCA-pyrophosphorylase</fullName>
        </alternativeName>
        <alternativeName>
            <fullName evidence="1">tRNA adenylyl-/cytidylyl-transferase</fullName>
        </alternativeName>
        <alternativeName>
            <fullName evidence="1">tRNA nucleotidyltransferase</fullName>
        </alternativeName>
        <alternativeName>
            <fullName evidence="1">tRNA-NT</fullName>
        </alternativeName>
    </domain>
    <domain>
        <recommendedName>
            <fullName evidence="1">2'-nucleotidase</fullName>
            <ecNumber evidence="1">3.1.3.-</ecNumber>
        </recommendedName>
    </domain>
    <domain>
        <recommendedName>
            <fullName evidence="1">2',3'-cyclic phosphodiesterase</fullName>
            <ecNumber evidence="1">3.1.4.-</ecNumber>
        </recommendedName>
    </domain>
    <domain>
        <recommendedName>
            <fullName evidence="1">Phosphatase</fullName>
            <ecNumber evidence="1">3.1.3.-</ecNumber>
        </recommendedName>
    </domain>
</protein>
<name>CCA_ALIFM</name>
<evidence type="ECO:0000255" key="1">
    <source>
        <dbReference type="HAMAP-Rule" id="MF_01261"/>
    </source>
</evidence>
<organism>
    <name type="scientific">Aliivibrio fischeri (strain MJ11)</name>
    <name type="common">Vibrio fischeri</name>
    <dbReference type="NCBI Taxonomy" id="388396"/>
    <lineage>
        <taxon>Bacteria</taxon>
        <taxon>Pseudomonadati</taxon>
        <taxon>Pseudomonadota</taxon>
        <taxon>Gammaproteobacteria</taxon>
        <taxon>Vibrionales</taxon>
        <taxon>Vibrionaceae</taxon>
        <taxon>Aliivibrio</taxon>
    </lineage>
</organism>
<dbReference type="EC" id="2.7.7.72" evidence="1"/>
<dbReference type="EC" id="3.1.3.-" evidence="1"/>
<dbReference type="EC" id="3.1.4.-" evidence="1"/>
<dbReference type="EMBL" id="CP001139">
    <property type="protein sequence ID" value="ACH66494.1"/>
    <property type="molecule type" value="Genomic_DNA"/>
</dbReference>
<dbReference type="RefSeq" id="WP_012533768.1">
    <property type="nucleotide sequence ID" value="NC_011184.1"/>
</dbReference>
<dbReference type="SMR" id="B5FB77"/>
<dbReference type="KEGG" id="vfm:VFMJ11_2355"/>
<dbReference type="HOGENOM" id="CLU_015961_1_1_6"/>
<dbReference type="Proteomes" id="UP000001857">
    <property type="component" value="Chromosome I"/>
</dbReference>
<dbReference type="GO" id="GO:0005524">
    <property type="term" value="F:ATP binding"/>
    <property type="evidence" value="ECO:0007669"/>
    <property type="project" value="UniProtKB-UniRule"/>
</dbReference>
<dbReference type="GO" id="GO:0004810">
    <property type="term" value="F:CCA tRNA nucleotidyltransferase activity"/>
    <property type="evidence" value="ECO:0007669"/>
    <property type="project" value="UniProtKB-UniRule"/>
</dbReference>
<dbReference type="GO" id="GO:0004112">
    <property type="term" value="F:cyclic-nucleotide phosphodiesterase activity"/>
    <property type="evidence" value="ECO:0007669"/>
    <property type="project" value="UniProtKB-UniRule"/>
</dbReference>
<dbReference type="GO" id="GO:0000287">
    <property type="term" value="F:magnesium ion binding"/>
    <property type="evidence" value="ECO:0007669"/>
    <property type="project" value="UniProtKB-UniRule"/>
</dbReference>
<dbReference type="GO" id="GO:0016791">
    <property type="term" value="F:phosphatase activity"/>
    <property type="evidence" value="ECO:0007669"/>
    <property type="project" value="UniProtKB-UniRule"/>
</dbReference>
<dbReference type="GO" id="GO:0000049">
    <property type="term" value="F:tRNA binding"/>
    <property type="evidence" value="ECO:0007669"/>
    <property type="project" value="UniProtKB-UniRule"/>
</dbReference>
<dbReference type="GO" id="GO:0042245">
    <property type="term" value="P:RNA repair"/>
    <property type="evidence" value="ECO:0007669"/>
    <property type="project" value="UniProtKB-KW"/>
</dbReference>
<dbReference type="GO" id="GO:0001680">
    <property type="term" value="P:tRNA 3'-terminal CCA addition"/>
    <property type="evidence" value="ECO:0007669"/>
    <property type="project" value="UniProtKB-UniRule"/>
</dbReference>
<dbReference type="CDD" id="cd00077">
    <property type="entry name" value="HDc"/>
    <property type="match status" value="1"/>
</dbReference>
<dbReference type="CDD" id="cd05398">
    <property type="entry name" value="NT_ClassII-CCAase"/>
    <property type="match status" value="1"/>
</dbReference>
<dbReference type="FunFam" id="1.10.3090.10:FF:000001">
    <property type="entry name" value="Multifunctional CCA protein"/>
    <property type="match status" value="1"/>
</dbReference>
<dbReference type="FunFam" id="3.30.460.10:FF:000016">
    <property type="entry name" value="Multifunctional CCA protein"/>
    <property type="match status" value="1"/>
</dbReference>
<dbReference type="Gene3D" id="3.30.460.10">
    <property type="entry name" value="Beta Polymerase, domain 2"/>
    <property type="match status" value="1"/>
</dbReference>
<dbReference type="Gene3D" id="1.10.3090.10">
    <property type="entry name" value="cca-adding enzyme, domain 2"/>
    <property type="match status" value="1"/>
</dbReference>
<dbReference type="HAMAP" id="MF_01261">
    <property type="entry name" value="CCA_bact_type1"/>
    <property type="match status" value="1"/>
</dbReference>
<dbReference type="HAMAP" id="MF_01262">
    <property type="entry name" value="CCA_bact_type2"/>
    <property type="match status" value="1"/>
</dbReference>
<dbReference type="InterPro" id="IPR012006">
    <property type="entry name" value="CCA_bact"/>
</dbReference>
<dbReference type="InterPro" id="IPR003607">
    <property type="entry name" value="HD/PDEase_dom"/>
</dbReference>
<dbReference type="InterPro" id="IPR006674">
    <property type="entry name" value="HD_domain"/>
</dbReference>
<dbReference type="InterPro" id="IPR043519">
    <property type="entry name" value="NT_sf"/>
</dbReference>
<dbReference type="InterPro" id="IPR002646">
    <property type="entry name" value="PolA_pol_head_dom"/>
</dbReference>
<dbReference type="InterPro" id="IPR032828">
    <property type="entry name" value="PolyA_RNA-bd"/>
</dbReference>
<dbReference type="InterPro" id="IPR050124">
    <property type="entry name" value="tRNA_CCA-adding_enzyme"/>
</dbReference>
<dbReference type="NCBIfam" id="NF008137">
    <property type="entry name" value="PRK10885.1"/>
    <property type="match status" value="1"/>
</dbReference>
<dbReference type="PANTHER" id="PTHR47545">
    <property type="entry name" value="MULTIFUNCTIONAL CCA PROTEIN"/>
    <property type="match status" value="1"/>
</dbReference>
<dbReference type="PANTHER" id="PTHR47545:SF1">
    <property type="entry name" value="MULTIFUNCTIONAL CCA PROTEIN"/>
    <property type="match status" value="1"/>
</dbReference>
<dbReference type="Pfam" id="PF01966">
    <property type="entry name" value="HD"/>
    <property type="match status" value="1"/>
</dbReference>
<dbReference type="Pfam" id="PF01743">
    <property type="entry name" value="PolyA_pol"/>
    <property type="match status" value="1"/>
</dbReference>
<dbReference type="Pfam" id="PF12627">
    <property type="entry name" value="PolyA_pol_RNAbd"/>
    <property type="match status" value="1"/>
</dbReference>
<dbReference type="PIRSF" id="PIRSF000813">
    <property type="entry name" value="CCA_bact"/>
    <property type="match status" value="1"/>
</dbReference>
<dbReference type="SUPFAM" id="SSF81301">
    <property type="entry name" value="Nucleotidyltransferase"/>
    <property type="match status" value="1"/>
</dbReference>
<dbReference type="SUPFAM" id="SSF81891">
    <property type="entry name" value="Poly A polymerase C-terminal region-like"/>
    <property type="match status" value="1"/>
</dbReference>
<dbReference type="PROSITE" id="PS51831">
    <property type="entry name" value="HD"/>
    <property type="match status" value="1"/>
</dbReference>
<feature type="chain" id="PRO_1000140058" description="Multifunctional CCA protein">
    <location>
        <begin position="1"/>
        <end position="407"/>
    </location>
</feature>
<feature type="domain" description="HD" evidence="1">
    <location>
        <begin position="228"/>
        <end position="329"/>
    </location>
</feature>
<feature type="binding site" evidence="1">
    <location>
        <position position="8"/>
    </location>
    <ligand>
        <name>ATP</name>
        <dbReference type="ChEBI" id="CHEBI:30616"/>
    </ligand>
</feature>
<feature type="binding site" evidence="1">
    <location>
        <position position="8"/>
    </location>
    <ligand>
        <name>CTP</name>
        <dbReference type="ChEBI" id="CHEBI:37563"/>
    </ligand>
</feature>
<feature type="binding site" evidence="1">
    <location>
        <position position="11"/>
    </location>
    <ligand>
        <name>ATP</name>
        <dbReference type="ChEBI" id="CHEBI:30616"/>
    </ligand>
</feature>
<feature type="binding site" evidence="1">
    <location>
        <position position="11"/>
    </location>
    <ligand>
        <name>CTP</name>
        <dbReference type="ChEBI" id="CHEBI:37563"/>
    </ligand>
</feature>
<feature type="binding site" evidence="1">
    <location>
        <position position="21"/>
    </location>
    <ligand>
        <name>Mg(2+)</name>
        <dbReference type="ChEBI" id="CHEBI:18420"/>
    </ligand>
</feature>
<feature type="binding site" evidence="1">
    <location>
        <position position="23"/>
    </location>
    <ligand>
        <name>Mg(2+)</name>
        <dbReference type="ChEBI" id="CHEBI:18420"/>
    </ligand>
</feature>
<feature type="binding site" evidence="1">
    <location>
        <position position="91"/>
    </location>
    <ligand>
        <name>ATP</name>
        <dbReference type="ChEBI" id="CHEBI:30616"/>
    </ligand>
</feature>
<feature type="binding site" evidence="1">
    <location>
        <position position="91"/>
    </location>
    <ligand>
        <name>CTP</name>
        <dbReference type="ChEBI" id="CHEBI:37563"/>
    </ligand>
</feature>
<feature type="binding site" evidence="1">
    <location>
        <position position="137"/>
    </location>
    <ligand>
        <name>ATP</name>
        <dbReference type="ChEBI" id="CHEBI:30616"/>
    </ligand>
</feature>
<feature type="binding site" evidence="1">
    <location>
        <position position="137"/>
    </location>
    <ligand>
        <name>CTP</name>
        <dbReference type="ChEBI" id="CHEBI:37563"/>
    </ligand>
</feature>
<feature type="binding site" evidence="1">
    <location>
        <position position="140"/>
    </location>
    <ligand>
        <name>ATP</name>
        <dbReference type="ChEBI" id="CHEBI:30616"/>
    </ligand>
</feature>
<feature type="binding site" evidence="1">
    <location>
        <position position="140"/>
    </location>
    <ligand>
        <name>CTP</name>
        <dbReference type="ChEBI" id="CHEBI:37563"/>
    </ligand>
</feature>
<gene>
    <name evidence="1" type="primary">cca</name>
    <name type="ordered locus">VFMJ11_2355</name>
</gene>
<reference key="1">
    <citation type="submission" date="2008-08" db="EMBL/GenBank/DDBJ databases">
        <title>Complete sequence of Vibrio fischeri strain MJ11.</title>
        <authorList>
            <person name="Mandel M.J."/>
            <person name="Stabb E.V."/>
            <person name="Ruby E.G."/>
            <person name="Ferriera S."/>
            <person name="Johnson J."/>
            <person name="Kravitz S."/>
            <person name="Beeson K."/>
            <person name="Sutton G."/>
            <person name="Rogers Y.-H."/>
            <person name="Friedman R."/>
            <person name="Frazier M."/>
            <person name="Venter J.C."/>
        </authorList>
    </citation>
    <scope>NUCLEOTIDE SEQUENCE [LARGE SCALE GENOMIC DNA]</scope>
    <source>
        <strain>MJ11</strain>
    </source>
</reference>
<accession>B5FB77</accession>
<proteinExistence type="inferred from homology"/>
<comment type="function">
    <text evidence="1">Catalyzes the addition and repair of the essential 3'-terminal CCA sequence in tRNAs without using a nucleic acid template. Adds these three nucleotides in the order of C, C, and A to the tRNA nucleotide-73, using CTP and ATP as substrates and producing inorganic pyrophosphate. tRNA 3'-terminal CCA addition is required both for tRNA processing and repair. Also involved in tRNA surveillance by mediating tandem CCA addition to generate a CCACCA at the 3' terminus of unstable tRNAs. While stable tRNAs receive only 3'-terminal CCA, unstable tRNAs are marked with CCACCA and rapidly degraded.</text>
</comment>
<comment type="catalytic activity">
    <reaction evidence="1">
        <text>a tRNA precursor + 2 CTP + ATP = a tRNA with a 3' CCA end + 3 diphosphate</text>
        <dbReference type="Rhea" id="RHEA:14433"/>
        <dbReference type="Rhea" id="RHEA-COMP:10465"/>
        <dbReference type="Rhea" id="RHEA-COMP:10468"/>
        <dbReference type="ChEBI" id="CHEBI:30616"/>
        <dbReference type="ChEBI" id="CHEBI:33019"/>
        <dbReference type="ChEBI" id="CHEBI:37563"/>
        <dbReference type="ChEBI" id="CHEBI:74896"/>
        <dbReference type="ChEBI" id="CHEBI:83071"/>
        <dbReference type="EC" id="2.7.7.72"/>
    </reaction>
</comment>
<comment type="catalytic activity">
    <reaction evidence="1">
        <text>a tRNA with a 3' CCA end + 2 CTP + ATP = a tRNA with a 3' CCACCA end + 3 diphosphate</text>
        <dbReference type="Rhea" id="RHEA:76235"/>
        <dbReference type="Rhea" id="RHEA-COMP:10468"/>
        <dbReference type="Rhea" id="RHEA-COMP:18655"/>
        <dbReference type="ChEBI" id="CHEBI:30616"/>
        <dbReference type="ChEBI" id="CHEBI:33019"/>
        <dbReference type="ChEBI" id="CHEBI:37563"/>
        <dbReference type="ChEBI" id="CHEBI:83071"/>
        <dbReference type="ChEBI" id="CHEBI:195187"/>
    </reaction>
    <physiologicalReaction direction="left-to-right" evidence="1">
        <dbReference type="Rhea" id="RHEA:76236"/>
    </physiologicalReaction>
</comment>
<comment type="cofactor">
    <cofactor evidence="1">
        <name>Mg(2+)</name>
        <dbReference type="ChEBI" id="CHEBI:18420"/>
    </cofactor>
    <text evidence="1">Magnesium is required for nucleotidyltransferase activity.</text>
</comment>
<comment type="cofactor">
    <cofactor evidence="1">
        <name>Ni(2+)</name>
        <dbReference type="ChEBI" id="CHEBI:49786"/>
    </cofactor>
    <text evidence="1">Nickel for phosphatase activity.</text>
</comment>
<comment type="subunit">
    <text evidence="1">Monomer. Can also form homodimers and oligomers.</text>
</comment>
<comment type="domain">
    <text evidence="1">Comprises two domains: an N-terminal domain containing the nucleotidyltransferase activity and a C-terminal HD domain associated with both phosphodiesterase and phosphatase activities.</text>
</comment>
<comment type="miscellaneous">
    <text evidence="1">A single active site specifically recognizes both ATP and CTP and is responsible for their addition.</text>
</comment>
<comment type="similarity">
    <text evidence="1">Belongs to the tRNA nucleotidyltransferase/poly(A) polymerase family. Bacterial CCA-adding enzyme type 1 subfamily.</text>
</comment>
<keyword id="KW-0067">ATP-binding</keyword>
<keyword id="KW-0378">Hydrolase</keyword>
<keyword id="KW-0460">Magnesium</keyword>
<keyword id="KW-0479">Metal-binding</keyword>
<keyword id="KW-0511">Multifunctional enzyme</keyword>
<keyword id="KW-0533">Nickel</keyword>
<keyword id="KW-0547">Nucleotide-binding</keyword>
<keyword id="KW-0548">Nucleotidyltransferase</keyword>
<keyword id="KW-0692">RNA repair</keyword>
<keyword id="KW-0694">RNA-binding</keyword>
<keyword id="KW-0808">Transferase</keyword>
<keyword id="KW-0819">tRNA processing</keyword>
<sequence length="407" mass="46130">MKIYLVGGAVRDSLLNIDVKDKDWVVVGSTPQEMGSLGYQTVGQDFPVFLHPKTKEEYALARTERKSGQGYKGFTCYAEPDVTLEEDLLRRDLTINAIAQADNGELIDPYNGQQDIIDRTLRHVSDAFTEDPLRVLRVARFAARFHHLGFTIAHETMNLMKVLVDSGELSHLTAERVWQEWQKSLSSQHPEIFLSTLKECGALAIVLPELNALFGVPQPEKWHPEIDSGIHTLMVAQQAALLSQDLPTRFAAQVHDLGKGVTPESEWPSHKLHCHTGIKLIKRLCDRVRVPNDYRDLALLVCEHHSNIHRAAELRAQTFIKIFDKMDVWRKPERLAPILLCCQADHAGRLGLETQPYPQKQRFEAAFDAAKMVEVKEVVAAGFKGQEIRDELNKRRIEAVKDKLDIK</sequence>